<evidence type="ECO:0000269" key="1">
    <source>
    </source>
</evidence>
<proteinExistence type="evidence at protein level"/>
<name>LECA3_HYPJA</name>
<dbReference type="GO" id="GO:0030246">
    <property type="term" value="F:carbohydrate binding"/>
    <property type="evidence" value="ECO:0007669"/>
    <property type="project" value="UniProtKB-KW"/>
</dbReference>
<reference key="1">
    <citation type="journal article" date="2009" name="Biosci. Biotechnol. Biochem.">
        <title>Strict binding specificity of small-sized lectins from the red alga Hypnea japonica for core (alpha1-6) fucosylated N-glycans.</title>
        <authorList>
            <person name="Okuyama S."/>
            <person name="Nakamura-Tsuruta S."/>
            <person name="Tateno H."/>
            <person name="Hirabayashi J."/>
            <person name="Matsubara K."/>
            <person name="Hori K."/>
        </authorList>
    </citation>
    <scope>PROTEIN SEQUENCE</scope>
    <scope>FUNCTION</scope>
</reference>
<protein>
    <recommendedName>
        <fullName>Hypnin-A3</fullName>
    </recommendedName>
</protein>
<organism>
    <name type="scientific">Hypnea japonica</name>
    <name type="common">Japanese red alga</name>
    <dbReference type="NCBI Taxonomy" id="105606"/>
    <lineage>
        <taxon>Eukaryota</taxon>
        <taxon>Rhodophyta</taxon>
        <taxon>Florideophyceae</taxon>
        <taxon>Rhodymeniophycidae</taxon>
        <taxon>Gigartinales</taxon>
        <taxon>Hypneaceae</taxon>
        <taxon>Hypnea</taxon>
    </lineage>
</organism>
<sequence>FGPGCGPSTFSCTSPQKILPGSSVSFPSGYSSIYLTTESGSASVYLDRPDGFWVGGADSRGCSNFGGFNGNGDSKVGNWGDVPVAAWACN</sequence>
<feature type="chain" id="PRO_0000371456" description="Hypnin-A3">
    <location>
        <begin position="1"/>
        <end position="90"/>
    </location>
</feature>
<comment type="function">
    <text evidence="1">Lectin specific for core(alpha 1-6)fucosylated N-glycans. Inhibits platelet aggregation.</text>
</comment>
<keyword id="KW-0903">Direct protein sequencing</keyword>
<keyword id="KW-0430">Lectin</keyword>
<accession>P85888</accession>